<comment type="function">
    <text evidence="1">Catalyzes the condensation of the acetyl group of acetyl-CoA with 3-methyl-2-oxobutanoate (2-ketoisovalerate) to form 3-carboxy-3-hydroxy-4-methylpentanoate (2-isopropylmalate).</text>
</comment>
<comment type="catalytic activity">
    <reaction evidence="1">
        <text>3-methyl-2-oxobutanoate + acetyl-CoA + H2O = (2S)-2-isopropylmalate + CoA + H(+)</text>
        <dbReference type="Rhea" id="RHEA:21524"/>
        <dbReference type="ChEBI" id="CHEBI:1178"/>
        <dbReference type="ChEBI" id="CHEBI:11851"/>
        <dbReference type="ChEBI" id="CHEBI:15377"/>
        <dbReference type="ChEBI" id="CHEBI:15378"/>
        <dbReference type="ChEBI" id="CHEBI:57287"/>
        <dbReference type="ChEBI" id="CHEBI:57288"/>
        <dbReference type="EC" id="2.3.3.13"/>
    </reaction>
</comment>
<comment type="cofactor">
    <cofactor evidence="1">
        <name>Mn(2+)</name>
        <dbReference type="ChEBI" id="CHEBI:29035"/>
    </cofactor>
</comment>
<comment type="pathway">
    <text evidence="1">Amino-acid biosynthesis; L-leucine biosynthesis; L-leucine from 3-methyl-2-oxobutanoate: step 1/4.</text>
</comment>
<comment type="subunit">
    <text evidence="1">Homodimer.</text>
</comment>
<comment type="subcellular location">
    <subcellularLocation>
        <location evidence="1">Cytoplasm</location>
    </subcellularLocation>
</comment>
<comment type="similarity">
    <text evidence="1">Belongs to the alpha-IPM synthase/homocitrate synthase family. LeuA type 1 subfamily.</text>
</comment>
<keyword id="KW-0028">Amino-acid biosynthesis</keyword>
<keyword id="KW-0100">Branched-chain amino acid biosynthesis</keyword>
<keyword id="KW-0963">Cytoplasm</keyword>
<keyword id="KW-0432">Leucine biosynthesis</keyword>
<keyword id="KW-0464">Manganese</keyword>
<keyword id="KW-0479">Metal-binding</keyword>
<keyword id="KW-0808">Transferase</keyword>
<sequence length="521" mass="56776">MTAPHTSANDRVIIFDTTLRDGEQCPGATMTFEEKLEVASLLDSMGVDVIEAGFPIASDGDFEAVHEIAKRAKNAVICGLSRAGAKDIDRCAEAIKPAKQGRIHTFLSTSPVHMKYKLQMDAAQVYELVISSVTRARNHTDNVEWSSEDGTRTEFDFLCKCVEAAIKAGASTINIPDTVGYSVPEEYYDLFKRVRENVPNSDKAIFSVHCHDDLGMAVANSLAGIRGGARQIECTVNGIGERAGNTALEEVVMAMKVRNDKLPYWNKIDTTMLTRASKVVSAATSFPVQYNKAIVGRNAFAHESGIHQDGMLKNAETYEIMLPESVGVKQTSLVMGKHSGRHAFIHKLEEMGYKLGQNQLEDAFVRFKALADRKKDIYDEDIEALVDLEIAQSHDRIKLVSLTVIAGTHGPQRATMKLDVDGQTKIEEAEGNGPVDAVFNCIKALVPHVAKLELYQVHAVTEGTDAQAEVSVRLSHEGRSVTSRASDPDTLVASAKAYLGALNKIVMKRQRDMAAPAAAAS</sequence>
<evidence type="ECO:0000255" key="1">
    <source>
        <dbReference type="HAMAP-Rule" id="MF_01025"/>
    </source>
</evidence>
<dbReference type="EC" id="2.3.3.13" evidence="1"/>
<dbReference type="EMBL" id="CP000463">
    <property type="protein sequence ID" value="ABJ06151.1"/>
    <property type="molecule type" value="Genomic_DNA"/>
</dbReference>
<dbReference type="SMR" id="Q07PI3"/>
<dbReference type="STRING" id="316055.RPE_2209"/>
<dbReference type="KEGG" id="rpe:RPE_2209"/>
<dbReference type="eggNOG" id="COG0119">
    <property type="taxonomic scope" value="Bacteria"/>
</dbReference>
<dbReference type="HOGENOM" id="CLU_022158_0_1_5"/>
<dbReference type="OrthoDB" id="9803573at2"/>
<dbReference type="UniPathway" id="UPA00048">
    <property type="reaction ID" value="UER00070"/>
</dbReference>
<dbReference type="GO" id="GO:0005829">
    <property type="term" value="C:cytosol"/>
    <property type="evidence" value="ECO:0007669"/>
    <property type="project" value="TreeGrafter"/>
</dbReference>
<dbReference type="GO" id="GO:0003852">
    <property type="term" value="F:2-isopropylmalate synthase activity"/>
    <property type="evidence" value="ECO:0007669"/>
    <property type="project" value="UniProtKB-UniRule"/>
</dbReference>
<dbReference type="GO" id="GO:0003985">
    <property type="term" value="F:acetyl-CoA C-acetyltransferase activity"/>
    <property type="evidence" value="ECO:0007669"/>
    <property type="project" value="UniProtKB-UniRule"/>
</dbReference>
<dbReference type="GO" id="GO:0030145">
    <property type="term" value="F:manganese ion binding"/>
    <property type="evidence" value="ECO:0007669"/>
    <property type="project" value="UniProtKB-UniRule"/>
</dbReference>
<dbReference type="GO" id="GO:0009098">
    <property type="term" value="P:L-leucine biosynthetic process"/>
    <property type="evidence" value="ECO:0007669"/>
    <property type="project" value="UniProtKB-UniRule"/>
</dbReference>
<dbReference type="CDD" id="cd07940">
    <property type="entry name" value="DRE_TIM_IPMS"/>
    <property type="match status" value="1"/>
</dbReference>
<dbReference type="FunFam" id="1.10.238.260:FF:000001">
    <property type="entry name" value="2-isopropylmalate synthase"/>
    <property type="match status" value="1"/>
</dbReference>
<dbReference type="FunFam" id="3.20.20.70:FF:000010">
    <property type="entry name" value="2-isopropylmalate synthase"/>
    <property type="match status" value="1"/>
</dbReference>
<dbReference type="FunFam" id="3.30.160.270:FF:000003">
    <property type="entry name" value="2-isopropylmalate synthase"/>
    <property type="match status" value="1"/>
</dbReference>
<dbReference type="Gene3D" id="1.10.238.260">
    <property type="match status" value="1"/>
</dbReference>
<dbReference type="Gene3D" id="3.30.160.270">
    <property type="match status" value="1"/>
</dbReference>
<dbReference type="Gene3D" id="3.20.20.70">
    <property type="entry name" value="Aldolase class I"/>
    <property type="match status" value="1"/>
</dbReference>
<dbReference type="HAMAP" id="MF_01025">
    <property type="entry name" value="LeuA_type1"/>
    <property type="match status" value="1"/>
</dbReference>
<dbReference type="InterPro" id="IPR050073">
    <property type="entry name" value="2-IPM_HCS-like"/>
</dbReference>
<dbReference type="InterPro" id="IPR013709">
    <property type="entry name" value="2-isopropylmalate_synth_dimer"/>
</dbReference>
<dbReference type="InterPro" id="IPR002034">
    <property type="entry name" value="AIPM/Hcit_synth_CS"/>
</dbReference>
<dbReference type="InterPro" id="IPR013785">
    <property type="entry name" value="Aldolase_TIM"/>
</dbReference>
<dbReference type="InterPro" id="IPR054691">
    <property type="entry name" value="LeuA/HCS_post-cat"/>
</dbReference>
<dbReference type="InterPro" id="IPR036230">
    <property type="entry name" value="LeuA_allosteric_dom_sf"/>
</dbReference>
<dbReference type="InterPro" id="IPR005671">
    <property type="entry name" value="LeuA_bact_synth"/>
</dbReference>
<dbReference type="InterPro" id="IPR000891">
    <property type="entry name" value="PYR_CT"/>
</dbReference>
<dbReference type="NCBIfam" id="TIGR00973">
    <property type="entry name" value="leuA_bact"/>
    <property type="match status" value="1"/>
</dbReference>
<dbReference type="NCBIfam" id="NF002086">
    <property type="entry name" value="PRK00915.1-3"/>
    <property type="match status" value="1"/>
</dbReference>
<dbReference type="NCBIfam" id="NF002087">
    <property type="entry name" value="PRK00915.1-4"/>
    <property type="match status" value="1"/>
</dbReference>
<dbReference type="PANTHER" id="PTHR10277:SF9">
    <property type="entry name" value="2-ISOPROPYLMALATE SYNTHASE 1, CHLOROPLASTIC-RELATED"/>
    <property type="match status" value="1"/>
</dbReference>
<dbReference type="PANTHER" id="PTHR10277">
    <property type="entry name" value="HOMOCITRATE SYNTHASE-RELATED"/>
    <property type="match status" value="1"/>
</dbReference>
<dbReference type="Pfam" id="PF22617">
    <property type="entry name" value="HCS_D2"/>
    <property type="match status" value="1"/>
</dbReference>
<dbReference type="Pfam" id="PF00682">
    <property type="entry name" value="HMGL-like"/>
    <property type="match status" value="1"/>
</dbReference>
<dbReference type="Pfam" id="PF08502">
    <property type="entry name" value="LeuA_dimer"/>
    <property type="match status" value="1"/>
</dbReference>
<dbReference type="SMART" id="SM00917">
    <property type="entry name" value="LeuA_dimer"/>
    <property type="match status" value="1"/>
</dbReference>
<dbReference type="SUPFAM" id="SSF110921">
    <property type="entry name" value="2-isopropylmalate synthase LeuA, allosteric (dimerisation) domain"/>
    <property type="match status" value="1"/>
</dbReference>
<dbReference type="SUPFAM" id="SSF51569">
    <property type="entry name" value="Aldolase"/>
    <property type="match status" value="1"/>
</dbReference>
<dbReference type="PROSITE" id="PS00815">
    <property type="entry name" value="AIPM_HOMOCIT_SYNTH_1"/>
    <property type="match status" value="1"/>
</dbReference>
<dbReference type="PROSITE" id="PS00816">
    <property type="entry name" value="AIPM_HOMOCIT_SYNTH_2"/>
    <property type="match status" value="1"/>
</dbReference>
<dbReference type="PROSITE" id="PS50991">
    <property type="entry name" value="PYR_CT"/>
    <property type="match status" value="1"/>
</dbReference>
<name>LEU1_RHOP5</name>
<protein>
    <recommendedName>
        <fullName evidence="1">2-isopropylmalate synthase</fullName>
        <ecNumber evidence="1">2.3.3.13</ecNumber>
    </recommendedName>
    <alternativeName>
        <fullName evidence="1">Alpha-IPM synthase</fullName>
    </alternativeName>
    <alternativeName>
        <fullName evidence="1">Alpha-isopropylmalate synthase</fullName>
    </alternativeName>
</protein>
<gene>
    <name evidence="1" type="primary">leuA</name>
    <name type="ordered locus">RPE_2209</name>
</gene>
<proteinExistence type="inferred from homology"/>
<feature type="chain" id="PRO_1000149257" description="2-isopropylmalate synthase">
    <location>
        <begin position="1"/>
        <end position="521"/>
    </location>
</feature>
<feature type="domain" description="Pyruvate carboxyltransferase" evidence="1">
    <location>
        <begin position="12"/>
        <end position="274"/>
    </location>
</feature>
<feature type="region of interest" description="Regulatory domain" evidence="1">
    <location>
        <begin position="398"/>
        <end position="521"/>
    </location>
</feature>
<feature type="binding site" evidence="1">
    <location>
        <position position="21"/>
    </location>
    <ligand>
        <name>Mn(2+)</name>
        <dbReference type="ChEBI" id="CHEBI:29035"/>
    </ligand>
</feature>
<feature type="binding site" evidence="1">
    <location>
        <position position="209"/>
    </location>
    <ligand>
        <name>Mn(2+)</name>
        <dbReference type="ChEBI" id="CHEBI:29035"/>
    </ligand>
</feature>
<feature type="binding site" evidence="1">
    <location>
        <position position="211"/>
    </location>
    <ligand>
        <name>Mn(2+)</name>
        <dbReference type="ChEBI" id="CHEBI:29035"/>
    </ligand>
</feature>
<feature type="binding site" evidence="1">
    <location>
        <position position="245"/>
    </location>
    <ligand>
        <name>Mn(2+)</name>
        <dbReference type="ChEBI" id="CHEBI:29035"/>
    </ligand>
</feature>
<accession>Q07PI3</accession>
<reference key="1">
    <citation type="submission" date="2006-09" db="EMBL/GenBank/DDBJ databases">
        <title>Complete sequence of Rhodopseudomonas palustris BisA53.</title>
        <authorList>
            <consortium name="US DOE Joint Genome Institute"/>
            <person name="Copeland A."/>
            <person name="Lucas S."/>
            <person name="Lapidus A."/>
            <person name="Barry K."/>
            <person name="Detter J.C."/>
            <person name="Glavina del Rio T."/>
            <person name="Hammon N."/>
            <person name="Israni S."/>
            <person name="Dalin E."/>
            <person name="Tice H."/>
            <person name="Pitluck S."/>
            <person name="Chain P."/>
            <person name="Malfatti S."/>
            <person name="Shin M."/>
            <person name="Vergez L."/>
            <person name="Schmutz J."/>
            <person name="Larimer F."/>
            <person name="Land M."/>
            <person name="Hauser L."/>
            <person name="Pelletier D.A."/>
            <person name="Kyrpides N."/>
            <person name="Kim E."/>
            <person name="Harwood C.S."/>
            <person name="Oda Y."/>
            <person name="Richardson P."/>
        </authorList>
    </citation>
    <scope>NUCLEOTIDE SEQUENCE [LARGE SCALE GENOMIC DNA]</scope>
    <source>
        <strain>BisA53</strain>
    </source>
</reference>
<organism>
    <name type="scientific">Rhodopseudomonas palustris (strain BisA53)</name>
    <dbReference type="NCBI Taxonomy" id="316055"/>
    <lineage>
        <taxon>Bacteria</taxon>
        <taxon>Pseudomonadati</taxon>
        <taxon>Pseudomonadota</taxon>
        <taxon>Alphaproteobacteria</taxon>
        <taxon>Hyphomicrobiales</taxon>
        <taxon>Nitrobacteraceae</taxon>
        <taxon>Rhodopseudomonas</taxon>
    </lineage>
</organism>